<sequence length="1032" mass="115410">MEEQVANAIEIASNPSADPALKTQAFDFVNQLRSDPSGWQVCLSLFTQTPQRSGIVRHVALEVVNSAAQGGLIDLQALAYVKDGLLAYLRQVYGQDAGASDPPNIQNKIAQTITFLFSALYASGWESFFDDLLGLTQKSPSSTTRDNASGIIFYLRVINSIHDEIGDVLVSRSRNEQDKANALKDLIRQRDMQKITSSWQQILSEWRDGNDVIVEMCLKAVGSWVSWIDIGLVVNQTMLDLLFRQLGRAQKEDLRQGEEKVRDAAVDVFTEIIGKKMKPEDKIDMIIFLNLDTIVSQLSNSPPLHGNRFTFKYDTDLAETVAKLVNITVIDIVRALEQEGVSTECKEKANGLLQAFLPHILRYFSDEYDEVCSTVIPCVSDLLTYLRRIAKVNPALASQHSSILLPILKAIIAKMRYDETSSWGEEDEQTDEAEFQELRKRLGILQQMIASINEQLYMEVVSEMVATTFENLRQSGSQMDWRDLDLALHEMFLFGDLAVKAGSLYTKGNPNNQAAERLIEMMLRMVESDIRSFTHPATQLQYTEICVRYSSFFHHHTHLIPGVLENFLQLVHHPIKKVKTRSWYLFQRLVKQLRQYVGNVAQTVVEALGDLLVIRAELPSEVSEGDEMSSEDHELADAIFNSQLYLFEAVGIICSTPTISPDKQVLYLQAVLNPIFLDMEKNLEAAKSQDERAILQIHHDIMALGTLARGFSDWMPGTNTPATLPAPEVSAAFNQVAEATLVALESLKSSFNVRTAARFAFSRLIGVLGSRILPQLPRWIDGLLTQTSSRDEMALFLRLLDQVIFGFKGEIFSILDTLLTPFLQRVFSGIADPTTGTDDEIQLAELKREYLNFLLAVLNNDLGAVIISERNQPIFETVISTIEHFSKDIDDFTTAKMAFSVLSKMSSSWGGPDVIAEASNGTPPSQAPLPGFGQFMITRFSPLCWALPSTPSFNSKDAQAKQVLAEAGGLQRTIYAKTGMEYLTYLRDRELPGMGMGGELIEEFVGALSRLDLKGFRQFFPVCLSNFHILSI</sequence>
<feature type="chain" id="PRO_0000343080" description="Exportin-T">
    <location>
        <begin position="1"/>
        <end position="1032"/>
    </location>
</feature>
<protein>
    <recommendedName>
        <fullName>Exportin-T</fullName>
    </recommendedName>
    <alternativeName>
        <fullName>Exportin(tRNA)</fullName>
    </alternativeName>
    <alternativeName>
        <fullName>Karyopherin-beta</fullName>
    </alternativeName>
    <alternativeName>
        <fullName>tRNA exportin</fullName>
    </alternativeName>
</protein>
<reference key="1">
    <citation type="journal article" date="2008" name="PLoS Genet.">
        <title>Genomic islands in the pathogenic filamentous fungus Aspergillus fumigatus.</title>
        <authorList>
            <person name="Fedorova N.D."/>
            <person name="Khaldi N."/>
            <person name="Joardar V.S."/>
            <person name="Maiti R."/>
            <person name="Amedeo P."/>
            <person name="Anderson M.J."/>
            <person name="Crabtree J."/>
            <person name="Silva J.C."/>
            <person name="Badger J.H."/>
            <person name="Albarraq A."/>
            <person name="Angiuoli S."/>
            <person name="Bussey H."/>
            <person name="Bowyer P."/>
            <person name="Cotty P.J."/>
            <person name="Dyer P.S."/>
            <person name="Egan A."/>
            <person name="Galens K."/>
            <person name="Fraser-Liggett C.M."/>
            <person name="Haas B.J."/>
            <person name="Inman J.M."/>
            <person name="Kent R."/>
            <person name="Lemieux S."/>
            <person name="Malavazi I."/>
            <person name="Orvis J."/>
            <person name="Roemer T."/>
            <person name="Ronning C.M."/>
            <person name="Sundaram J.P."/>
            <person name="Sutton G."/>
            <person name="Turner G."/>
            <person name="Venter J.C."/>
            <person name="White O.R."/>
            <person name="Whitty B.R."/>
            <person name="Youngman P."/>
            <person name="Wolfe K.H."/>
            <person name="Goldman G.H."/>
            <person name="Wortman J.R."/>
            <person name="Jiang B."/>
            <person name="Denning D.W."/>
            <person name="Nierman W.C."/>
        </authorList>
    </citation>
    <scope>NUCLEOTIDE SEQUENCE [LARGE SCALE GENOMIC DNA]</scope>
    <source>
        <strain>CBS 144.89 / FGSC A1163 / CEA10</strain>
    </source>
</reference>
<gene>
    <name type="primary">los1</name>
    <name type="ORF">AFUB_057410</name>
</gene>
<name>XPOT_ASPFC</name>
<accession>B0Y4D6</accession>
<evidence type="ECO:0000250" key="1"/>
<evidence type="ECO:0000305" key="2"/>
<comment type="function">
    <text evidence="1">tRNA nucleus export receptor which facilitates tRNA translocation across the nuclear pore complex. Involved in pre-tRNA splicing, probably by affecting the interaction of pre-tRNA with splicing endonuclease (By similarity).</text>
</comment>
<comment type="subcellular location">
    <subcellularLocation>
        <location evidence="1">Nucleus</location>
    </subcellularLocation>
    <subcellularLocation>
        <location evidence="1">Cytoplasm</location>
    </subcellularLocation>
    <text evidence="1">Shuttles between the nucleus and the cytoplasm.</text>
</comment>
<comment type="similarity">
    <text evidence="2">Belongs to the exportin family.</text>
</comment>
<comment type="sequence caution" evidence="2">
    <conflict type="erroneous gene model prediction">
        <sequence resource="EMBL-CDS" id="EDP51727"/>
    </conflict>
</comment>
<organism>
    <name type="scientific">Aspergillus fumigatus (strain CBS 144.89 / FGSC A1163 / CEA10)</name>
    <name type="common">Neosartorya fumigata</name>
    <dbReference type="NCBI Taxonomy" id="451804"/>
    <lineage>
        <taxon>Eukaryota</taxon>
        <taxon>Fungi</taxon>
        <taxon>Dikarya</taxon>
        <taxon>Ascomycota</taxon>
        <taxon>Pezizomycotina</taxon>
        <taxon>Eurotiomycetes</taxon>
        <taxon>Eurotiomycetidae</taxon>
        <taxon>Eurotiales</taxon>
        <taxon>Aspergillaceae</taxon>
        <taxon>Aspergillus</taxon>
        <taxon>Aspergillus subgen. Fumigati</taxon>
    </lineage>
</organism>
<keyword id="KW-0963">Cytoplasm</keyword>
<keyword id="KW-0539">Nucleus</keyword>
<keyword id="KW-0694">RNA-binding</keyword>
<keyword id="KW-0813">Transport</keyword>
<keyword id="KW-0819">tRNA processing</keyword>
<keyword id="KW-0820">tRNA-binding</keyword>
<proteinExistence type="inferred from homology"/>
<dbReference type="EMBL" id="DS499597">
    <property type="protein sequence ID" value="EDP51727.1"/>
    <property type="status" value="ALT_SEQ"/>
    <property type="molecule type" value="Genomic_DNA"/>
</dbReference>
<dbReference type="SMR" id="B0Y4D6"/>
<dbReference type="OrthoDB" id="96060at5052"/>
<dbReference type="PhylomeDB" id="B0Y4D6"/>
<dbReference type="Proteomes" id="UP000001699">
    <property type="component" value="Unassembled WGS sequence"/>
</dbReference>
<dbReference type="GO" id="GO:0005737">
    <property type="term" value="C:cytoplasm"/>
    <property type="evidence" value="ECO:0007669"/>
    <property type="project" value="UniProtKB-SubCell"/>
</dbReference>
<dbReference type="GO" id="GO:0016363">
    <property type="term" value="C:nuclear matrix"/>
    <property type="evidence" value="ECO:0007669"/>
    <property type="project" value="TreeGrafter"/>
</dbReference>
<dbReference type="GO" id="GO:0005643">
    <property type="term" value="C:nuclear pore"/>
    <property type="evidence" value="ECO:0007669"/>
    <property type="project" value="TreeGrafter"/>
</dbReference>
<dbReference type="GO" id="GO:0031267">
    <property type="term" value="F:small GTPase binding"/>
    <property type="evidence" value="ECO:0007669"/>
    <property type="project" value="InterPro"/>
</dbReference>
<dbReference type="GO" id="GO:0000049">
    <property type="term" value="F:tRNA binding"/>
    <property type="evidence" value="ECO:0007669"/>
    <property type="project" value="UniProtKB-KW"/>
</dbReference>
<dbReference type="GO" id="GO:0008033">
    <property type="term" value="P:tRNA processing"/>
    <property type="evidence" value="ECO:0007669"/>
    <property type="project" value="UniProtKB-KW"/>
</dbReference>
<dbReference type="GO" id="GO:0071528">
    <property type="term" value="P:tRNA re-export from nucleus"/>
    <property type="evidence" value="ECO:0007669"/>
    <property type="project" value="InterPro"/>
</dbReference>
<dbReference type="FunFam" id="1.25.10.10:FF:000355">
    <property type="entry name" value="Exportin-T"/>
    <property type="match status" value="1"/>
</dbReference>
<dbReference type="Gene3D" id="1.25.10.10">
    <property type="entry name" value="Leucine-rich Repeat Variant"/>
    <property type="match status" value="1"/>
</dbReference>
<dbReference type="InterPro" id="IPR011989">
    <property type="entry name" value="ARM-like"/>
</dbReference>
<dbReference type="InterPro" id="IPR016024">
    <property type="entry name" value="ARM-type_fold"/>
</dbReference>
<dbReference type="InterPro" id="IPR013598">
    <property type="entry name" value="Exportin-1/Importin-b-like"/>
</dbReference>
<dbReference type="InterPro" id="IPR045546">
    <property type="entry name" value="Exportin-T_C"/>
</dbReference>
<dbReference type="InterPro" id="IPR040017">
    <property type="entry name" value="XPOT"/>
</dbReference>
<dbReference type="PANTHER" id="PTHR15952:SF11">
    <property type="entry name" value="EXPORTIN-T"/>
    <property type="match status" value="1"/>
</dbReference>
<dbReference type="PANTHER" id="PTHR15952">
    <property type="entry name" value="EXPORTIN-T/LOS1"/>
    <property type="match status" value="1"/>
</dbReference>
<dbReference type="Pfam" id="PF19282">
    <property type="entry name" value="Exportin-T"/>
    <property type="match status" value="1"/>
</dbReference>
<dbReference type="Pfam" id="PF08389">
    <property type="entry name" value="Xpo1"/>
    <property type="match status" value="1"/>
</dbReference>
<dbReference type="SUPFAM" id="SSF48371">
    <property type="entry name" value="ARM repeat"/>
    <property type="match status" value="1"/>
</dbReference>